<comment type="function">
    <text evidence="1">Together with the chaperonin GroEL, plays an essential role in assisting protein folding. The GroEL-GroES system forms a nano-cage that allows encapsulation of the non-native substrate proteins and provides a physical environment optimized to promote and accelerate protein folding. GroES binds to the apical surface of the GroEL ring, thereby capping the opening of the GroEL channel.</text>
</comment>
<comment type="subunit">
    <text evidence="1">Heptamer of 7 subunits arranged in a ring. Interacts with the chaperonin GroEL.</text>
</comment>
<comment type="subcellular location">
    <subcellularLocation>
        <location evidence="1">Cytoplasm</location>
    </subcellularLocation>
</comment>
<comment type="similarity">
    <text evidence="1">Belongs to the GroES chaperonin family.</text>
</comment>
<evidence type="ECO:0000255" key="1">
    <source>
        <dbReference type="HAMAP-Rule" id="MF_00580"/>
    </source>
</evidence>
<accession>B1LQG3</accession>
<feature type="chain" id="PRO_1000129658" description="Co-chaperonin GroES">
    <location>
        <begin position="1"/>
        <end position="97"/>
    </location>
</feature>
<protein>
    <recommendedName>
        <fullName evidence="1">Co-chaperonin GroES</fullName>
    </recommendedName>
    <alternativeName>
        <fullName evidence="1">10 kDa chaperonin</fullName>
    </alternativeName>
    <alternativeName>
        <fullName evidence="1">Chaperonin-10</fullName>
        <shortName evidence="1">Cpn10</shortName>
    </alternativeName>
</protein>
<reference key="1">
    <citation type="journal article" date="2008" name="J. Bacteriol.">
        <title>Insights into the environmental resistance gene pool from the genome sequence of the multidrug-resistant environmental isolate Escherichia coli SMS-3-5.</title>
        <authorList>
            <person name="Fricke W.F."/>
            <person name="Wright M.S."/>
            <person name="Lindell A.H."/>
            <person name="Harkins D.M."/>
            <person name="Baker-Austin C."/>
            <person name="Ravel J."/>
            <person name="Stepanauskas R."/>
        </authorList>
    </citation>
    <scope>NUCLEOTIDE SEQUENCE [LARGE SCALE GENOMIC DNA]</scope>
    <source>
        <strain>SMS-3-5 / SECEC</strain>
    </source>
</reference>
<organism>
    <name type="scientific">Escherichia coli (strain SMS-3-5 / SECEC)</name>
    <dbReference type="NCBI Taxonomy" id="439855"/>
    <lineage>
        <taxon>Bacteria</taxon>
        <taxon>Pseudomonadati</taxon>
        <taxon>Pseudomonadota</taxon>
        <taxon>Gammaproteobacteria</taxon>
        <taxon>Enterobacterales</taxon>
        <taxon>Enterobacteriaceae</taxon>
        <taxon>Escherichia</taxon>
    </lineage>
</organism>
<sequence length="97" mass="10387">MNIRPLHDRVIVKRKEVETKSAGGIVLTGSAAAKSTRGEVLAVGNGRILENGEVKPLDVKVGDIVIFNDGYGVKSEKIDNEEVLIMSESDILAIVEA</sequence>
<gene>
    <name evidence="1" type="primary">groES</name>
    <name evidence="1" type="synonym">groS</name>
    <name type="ordered locus">EcSMS35_4611</name>
</gene>
<name>CH10_ECOSM</name>
<keyword id="KW-0143">Chaperone</keyword>
<keyword id="KW-0963">Cytoplasm</keyword>
<proteinExistence type="inferred from homology"/>
<dbReference type="EMBL" id="CP000970">
    <property type="protein sequence ID" value="ACB18219.1"/>
    <property type="molecule type" value="Genomic_DNA"/>
</dbReference>
<dbReference type="RefSeq" id="WP_001026276.1">
    <property type="nucleotide sequence ID" value="NC_010498.1"/>
</dbReference>
<dbReference type="BMRB" id="B1LQG3"/>
<dbReference type="SMR" id="B1LQG3"/>
<dbReference type="KEGG" id="ecm:EcSMS35_4611"/>
<dbReference type="HOGENOM" id="CLU_132825_1_1_6"/>
<dbReference type="Proteomes" id="UP000007011">
    <property type="component" value="Chromosome"/>
</dbReference>
<dbReference type="GO" id="GO:0005737">
    <property type="term" value="C:cytoplasm"/>
    <property type="evidence" value="ECO:0007669"/>
    <property type="project" value="UniProtKB-SubCell"/>
</dbReference>
<dbReference type="GO" id="GO:0005524">
    <property type="term" value="F:ATP binding"/>
    <property type="evidence" value="ECO:0007669"/>
    <property type="project" value="InterPro"/>
</dbReference>
<dbReference type="GO" id="GO:0046872">
    <property type="term" value="F:metal ion binding"/>
    <property type="evidence" value="ECO:0007669"/>
    <property type="project" value="TreeGrafter"/>
</dbReference>
<dbReference type="GO" id="GO:0044183">
    <property type="term" value="F:protein folding chaperone"/>
    <property type="evidence" value="ECO:0007669"/>
    <property type="project" value="InterPro"/>
</dbReference>
<dbReference type="GO" id="GO:0051087">
    <property type="term" value="F:protein-folding chaperone binding"/>
    <property type="evidence" value="ECO:0007669"/>
    <property type="project" value="TreeGrafter"/>
</dbReference>
<dbReference type="GO" id="GO:0051082">
    <property type="term" value="F:unfolded protein binding"/>
    <property type="evidence" value="ECO:0007669"/>
    <property type="project" value="TreeGrafter"/>
</dbReference>
<dbReference type="GO" id="GO:0051085">
    <property type="term" value="P:chaperone cofactor-dependent protein refolding"/>
    <property type="evidence" value="ECO:0007669"/>
    <property type="project" value="TreeGrafter"/>
</dbReference>
<dbReference type="CDD" id="cd00320">
    <property type="entry name" value="cpn10"/>
    <property type="match status" value="1"/>
</dbReference>
<dbReference type="FunFam" id="2.30.33.40:FF:000001">
    <property type="entry name" value="10 kDa chaperonin"/>
    <property type="match status" value="1"/>
</dbReference>
<dbReference type="Gene3D" id="2.30.33.40">
    <property type="entry name" value="GroES chaperonin"/>
    <property type="match status" value="1"/>
</dbReference>
<dbReference type="HAMAP" id="MF_00580">
    <property type="entry name" value="CH10"/>
    <property type="match status" value="1"/>
</dbReference>
<dbReference type="InterPro" id="IPR020818">
    <property type="entry name" value="Chaperonin_GroES"/>
</dbReference>
<dbReference type="InterPro" id="IPR037124">
    <property type="entry name" value="Chaperonin_GroES_sf"/>
</dbReference>
<dbReference type="InterPro" id="IPR018369">
    <property type="entry name" value="Chaprnonin_Cpn10_CS"/>
</dbReference>
<dbReference type="InterPro" id="IPR011032">
    <property type="entry name" value="GroES-like_sf"/>
</dbReference>
<dbReference type="NCBIfam" id="NF001526">
    <property type="entry name" value="PRK00364.1-1"/>
    <property type="match status" value="1"/>
</dbReference>
<dbReference type="NCBIfam" id="NF001527">
    <property type="entry name" value="PRK00364.1-2"/>
    <property type="match status" value="1"/>
</dbReference>
<dbReference type="NCBIfam" id="NF001531">
    <property type="entry name" value="PRK00364.2-2"/>
    <property type="match status" value="1"/>
</dbReference>
<dbReference type="PANTHER" id="PTHR10772">
    <property type="entry name" value="10 KDA HEAT SHOCK PROTEIN"/>
    <property type="match status" value="1"/>
</dbReference>
<dbReference type="PANTHER" id="PTHR10772:SF58">
    <property type="entry name" value="CO-CHAPERONIN GROES"/>
    <property type="match status" value="1"/>
</dbReference>
<dbReference type="Pfam" id="PF00166">
    <property type="entry name" value="Cpn10"/>
    <property type="match status" value="1"/>
</dbReference>
<dbReference type="PRINTS" id="PR00297">
    <property type="entry name" value="CHAPERONIN10"/>
</dbReference>
<dbReference type="SMART" id="SM00883">
    <property type="entry name" value="Cpn10"/>
    <property type="match status" value="1"/>
</dbReference>
<dbReference type="SUPFAM" id="SSF50129">
    <property type="entry name" value="GroES-like"/>
    <property type="match status" value="1"/>
</dbReference>
<dbReference type="PROSITE" id="PS00681">
    <property type="entry name" value="CHAPERONINS_CPN10"/>
    <property type="match status" value="1"/>
</dbReference>